<evidence type="ECO:0000255" key="1">
    <source>
        <dbReference type="HAMAP-Rule" id="MF_01633"/>
    </source>
</evidence>
<dbReference type="EC" id="6.3.4.20" evidence="1"/>
<dbReference type="EMBL" id="CP000851">
    <property type="protein sequence ID" value="ABV87669.1"/>
    <property type="molecule type" value="Genomic_DNA"/>
</dbReference>
<dbReference type="RefSeq" id="WP_012155583.1">
    <property type="nucleotide sequence ID" value="NC_009901.1"/>
</dbReference>
<dbReference type="SMR" id="A8H532"/>
<dbReference type="STRING" id="398579.Spea_2349"/>
<dbReference type="KEGG" id="spl:Spea_2349"/>
<dbReference type="eggNOG" id="COG0603">
    <property type="taxonomic scope" value="Bacteria"/>
</dbReference>
<dbReference type="HOGENOM" id="CLU_081854_0_0_6"/>
<dbReference type="OrthoDB" id="9789567at2"/>
<dbReference type="UniPathway" id="UPA00391"/>
<dbReference type="Proteomes" id="UP000002608">
    <property type="component" value="Chromosome"/>
</dbReference>
<dbReference type="GO" id="GO:0005524">
    <property type="term" value="F:ATP binding"/>
    <property type="evidence" value="ECO:0007669"/>
    <property type="project" value="UniProtKB-UniRule"/>
</dbReference>
<dbReference type="GO" id="GO:0016879">
    <property type="term" value="F:ligase activity, forming carbon-nitrogen bonds"/>
    <property type="evidence" value="ECO:0007669"/>
    <property type="project" value="UniProtKB-UniRule"/>
</dbReference>
<dbReference type="GO" id="GO:0008270">
    <property type="term" value="F:zinc ion binding"/>
    <property type="evidence" value="ECO:0007669"/>
    <property type="project" value="UniProtKB-UniRule"/>
</dbReference>
<dbReference type="GO" id="GO:0008616">
    <property type="term" value="P:queuosine biosynthetic process"/>
    <property type="evidence" value="ECO:0007669"/>
    <property type="project" value="UniProtKB-UniRule"/>
</dbReference>
<dbReference type="CDD" id="cd01995">
    <property type="entry name" value="QueC-like"/>
    <property type="match status" value="1"/>
</dbReference>
<dbReference type="FunFam" id="3.40.50.620:FF:000017">
    <property type="entry name" value="7-cyano-7-deazaguanine synthase"/>
    <property type="match status" value="1"/>
</dbReference>
<dbReference type="Gene3D" id="3.40.50.620">
    <property type="entry name" value="HUPs"/>
    <property type="match status" value="1"/>
</dbReference>
<dbReference type="HAMAP" id="MF_01633">
    <property type="entry name" value="QueC"/>
    <property type="match status" value="1"/>
</dbReference>
<dbReference type="InterPro" id="IPR018317">
    <property type="entry name" value="QueC"/>
</dbReference>
<dbReference type="InterPro" id="IPR014729">
    <property type="entry name" value="Rossmann-like_a/b/a_fold"/>
</dbReference>
<dbReference type="NCBIfam" id="TIGR00364">
    <property type="entry name" value="7-cyano-7-deazaguanine synthase QueC"/>
    <property type="match status" value="1"/>
</dbReference>
<dbReference type="NCBIfam" id="NF008317">
    <property type="entry name" value="PRK11106.1"/>
    <property type="match status" value="1"/>
</dbReference>
<dbReference type="PANTHER" id="PTHR42914">
    <property type="entry name" value="7-CYANO-7-DEAZAGUANINE SYNTHASE"/>
    <property type="match status" value="1"/>
</dbReference>
<dbReference type="PANTHER" id="PTHR42914:SF1">
    <property type="entry name" value="7-CYANO-7-DEAZAGUANINE SYNTHASE"/>
    <property type="match status" value="1"/>
</dbReference>
<dbReference type="Pfam" id="PF06508">
    <property type="entry name" value="QueC"/>
    <property type="match status" value="1"/>
</dbReference>
<dbReference type="PIRSF" id="PIRSF006293">
    <property type="entry name" value="ExsB"/>
    <property type="match status" value="1"/>
</dbReference>
<dbReference type="SUPFAM" id="SSF52402">
    <property type="entry name" value="Adenine nucleotide alpha hydrolases-like"/>
    <property type="match status" value="1"/>
</dbReference>
<sequence length="227" mass="25032">MSKAVVVFSGGQDSTTCLIQALQHFDEVHGITFDYGQRHREEIEIAKTLASKLKLASHKVMDVTLLNELAISALTRDSIPVSNDLMDNGLPNTFVPGRNILFLTLAGIYAYQLGADVVITGVCETDFSGYPDCRNDFVKAMQAALEQGMDKKLTIQTPLMWLDKAETWALADKYQSLDLIRDETLTCYNGIKGDGCGTCPACLLRKRGLEEYLADKEAIQARLTAKC</sequence>
<protein>
    <recommendedName>
        <fullName evidence="1">7-cyano-7-deazaguanine synthase</fullName>
        <ecNumber evidence="1">6.3.4.20</ecNumber>
    </recommendedName>
    <alternativeName>
        <fullName evidence="1">7-cyano-7-carbaguanine synthase</fullName>
    </alternativeName>
    <alternativeName>
        <fullName evidence="1">PreQ(0) synthase</fullName>
    </alternativeName>
    <alternativeName>
        <fullName evidence="1">Queuosine biosynthesis protein QueC</fullName>
    </alternativeName>
</protein>
<comment type="function">
    <text evidence="1">Catalyzes the ATP-dependent conversion of 7-carboxy-7-deazaguanine (CDG) to 7-cyano-7-deazaguanine (preQ(0)).</text>
</comment>
<comment type="catalytic activity">
    <reaction evidence="1">
        <text>7-carboxy-7-deazaguanine + NH4(+) + ATP = 7-cyano-7-deazaguanine + ADP + phosphate + H2O + H(+)</text>
        <dbReference type="Rhea" id="RHEA:27982"/>
        <dbReference type="ChEBI" id="CHEBI:15377"/>
        <dbReference type="ChEBI" id="CHEBI:15378"/>
        <dbReference type="ChEBI" id="CHEBI:28938"/>
        <dbReference type="ChEBI" id="CHEBI:30616"/>
        <dbReference type="ChEBI" id="CHEBI:43474"/>
        <dbReference type="ChEBI" id="CHEBI:45075"/>
        <dbReference type="ChEBI" id="CHEBI:61036"/>
        <dbReference type="ChEBI" id="CHEBI:456216"/>
        <dbReference type="EC" id="6.3.4.20"/>
    </reaction>
</comment>
<comment type="cofactor">
    <cofactor evidence="1">
        <name>Zn(2+)</name>
        <dbReference type="ChEBI" id="CHEBI:29105"/>
    </cofactor>
    <text evidence="1">Binds 1 zinc ion per subunit.</text>
</comment>
<comment type="pathway">
    <text evidence="1">Purine metabolism; 7-cyano-7-deazaguanine biosynthesis.</text>
</comment>
<comment type="similarity">
    <text evidence="1">Belongs to the QueC family.</text>
</comment>
<proteinExistence type="inferred from homology"/>
<reference key="1">
    <citation type="submission" date="2007-10" db="EMBL/GenBank/DDBJ databases">
        <title>Complete sequence of Shewanella pealeana ATCC 700345.</title>
        <authorList>
            <consortium name="US DOE Joint Genome Institute"/>
            <person name="Copeland A."/>
            <person name="Lucas S."/>
            <person name="Lapidus A."/>
            <person name="Barry K."/>
            <person name="Glavina del Rio T."/>
            <person name="Dalin E."/>
            <person name="Tice H."/>
            <person name="Pitluck S."/>
            <person name="Chertkov O."/>
            <person name="Brettin T."/>
            <person name="Bruce D."/>
            <person name="Detter J.C."/>
            <person name="Han C."/>
            <person name="Schmutz J."/>
            <person name="Larimer F."/>
            <person name="Land M."/>
            <person name="Hauser L."/>
            <person name="Kyrpides N."/>
            <person name="Kim E."/>
            <person name="Zhao J.-S.Z."/>
            <person name="Manno D."/>
            <person name="Hawari J."/>
            <person name="Richardson P."/>
        </authorList>
    </citation>
    <scope>NUCLEOTIDE SEQUENCE [LARGE SCALE GENOMIC DNA]</scope>
    <source>
        <strain>ATCC 700345 / ANG-SQ1</strain>
    </source>
</reference>
<feature type="chain" id="PRO_1000088164" description="7-cyano-7-deazaguanine synthase">
    <location>
        <begin position="1"/>
        <end position="227"/>
    </location>
</feature>
<feature type="binding site" evidence="1">
    <location>
        <begin position="8"/>
        <end position="18"/>
    </location>
    <ligand>
        <name>ATP</name>
        <dbReference type="ChEBI" id="CHEBI:30616"/>
    </ligand>
</feature>
<feature type="binding site" evidence="1">
    <location>
        <position position="187"/>
    </location>
    <ligand>
        <name>Zn(2+)</name>
        <dbReference type="ChEBI" id="CHEBI:29105"/>
    </ligand>
</feature>
<feature type="binding site" evidence="1">
    <location>
        <position position="196"/>
    </location>
    <ligand>
        <name>Zn(2+)</name>
        <dbReference type="ChEBI" id="CHEBI:29105"/>
    </ligand>
</feature>
<feature type="binding site" evidence="1">
    <location>
        <position position="199"/>
    </location>
    <ligand>
        <name>Zn(2+)</name>
        <dbReference type="ChEBI" id="CHEBI:29105"/>
    </ligand>
</feature>
<feature type="binding site" evidence="1">
    <location>
        <position position="202"/>
    </location>
    <ligand>
        <name>Zn(2+)</name>
        <dbReference type="ChEBI" id="CHEBI:29105"/>
    </ligand>
</feature>
<keyword id="KW-0067">ATP-binding</keyword>
<keyword id="KW-0436">Ligase</keyword>
<keyword id="KW-0479">Metal-binding</keyword>
<keyword id="KW-0547">Nucleotide-binding</keyword>
<keyword id="KW-0671">Queuosine biosynthesis</keyword>
<keyword id="KW-1185">Reference proteome</keyword>
<keyword id="KW-0862">Zinc</keyword>
<accession>A8H532</accession>
<gene>
    <name evidence="1" type="primary">queC</name>
    <name type="ordered locus">Spea_2349</name>
</gene>
<name>QUEC_SHEPA</name>
<organism>
    <name type="scientific">Shewanella pealeana (strain ATCC 700345 / ANG-SQ1)</name>
    <dbReference type="NCBI Taxonomy" id="398579"/>
    <lineage>
        <taxon>Bacteria</taxon>
        <taxon>Pseudomonadati</taxon>
        <taxon>Pseudomonadota</taxon>
        <taxon>Gammaproteobacteria</taxon>
        <taxon>Alteromonadales</taxon>
        <taxon>Shewanellaceae</taxon>
        <taxon>Shewanella</taxon>
    </lineage>
</organism>